<name>RIBF_MYCPN</name>
<protein>
    <recommendedName>
        <fullName evidence="1">Bifunctional riboflavin kinase/FMN adenylyltransferase</fullName>
    </recommendedName>
    <alternativeName>
        <fullName evidence="1">Riboflavin biosynthesis protein RibF</fullName>
    </alternativeName>
    <domain>
        <recommendedName>
            <fullName evidence="1">Riboflavin kinase</fullName>
            <ecNumber evidence="1">2.7.1.26</ecNumber>
        </recommendedName>
        <alternativeName>
            <fullName evidence="1">Flavokinase</fullName>
        </alternativeName>
    </domain>
    <domain>
        <recommendedName>
            <fullName evidence="1">FMN adenylyltransferase</fullName>
            <ecNumber evidence="1">2.7.7.2</ecNumber>
        </recommendedName>
        <alternativeName>
            <fullName evidence="1">FAD pyrophosphorylase</fullName>
        </alternativeName>
        <alternativeName>
            <fullName evidence="1">FAD synthase</fullName>
        </alternativeName>
    </domain>
</protein>
<sequence>MQQTLIIGAFDGLHKGHQLLAQAASGPVVALLIANIPSLQSDWLYEPKQRQVQLQQHFQSVVHSYDVIEHNISAQAFFDQIISPLRCQQLVVGADFCFGKDNQNADFLRRLFPNTTIIPKDSQTLSSSTIRQWLKQGQIEQANAVLLEPYFREGVVIRGNQQARFLGWPTANITLKPYMVPLRCGSYVITVTYHQTNYPGVGFISYKNDQLVCETHLIGFSGDLYGKQLRFTFNQFIRPQQKFSGVQALQKAISGDLKQAQKWFAQSTN</sequence>
<comment type="function">
    <text evidence="1">Catalyzes the phosphorylation of riboflavin to FMN followed by the adenylation of FMN to FAD.</text>
</comment>
<comment type="catalytic activity">
    <reaction evidence="1">
        <text>riboflavin + ATP = FMN + ADP + H(+)</text>
        <dbReference type="Rhea" id="RHEA:14357"/>
        <dbReference type="ChEBI" id="CHEBI:15378"/>
        <dbReference type="ChEBI" id="CHEBI:30616"/>
        <dbReference type="ChEBI" id="CHEBI:57986"/>
        <dbReference type="ChEBI" id="CHEBI:58210"/>
        <dbReference type="ChEBI" id="CHEBI:456216"/>
        <dbReference type="EC" id="2.7.1.26"/>
    </reaction>
</comment>
<comment type="catalytic activity">
    <reaction evidence="1">
        <text>FMN + ATP + H(+) = FAD + diphosphate</text>
        <dbReference type="Rhea" id="RHEA:17237"/>
        <dbReference type="ChEBI" id="CHEBI:15378"/>
        <dbReference type="ChEBI" id="CHEBI:30616"/>
        <dbReference type="ChEBI" id="CHEBI:33019"/>
        <dbReference type="ChEBI" id="CHEBI:57692"/>
        <dbReference type="ChEBI" id="CHEBI:58210"/>
        <dbReference type="EC" id="2.7.7.2"/>
    </reaction>
</comment>
<comment type="pathway">
    <text evidence="1">Cofactor biosynthesis; FAD biosynthesis; FAD from FMN: step 1/1.</text>
</comment>
<comment type="pathway">
    <text evidence="1">Cofactor biosynthesis; FMN biosynthesis; FMN from riboflavin (ATP route): step 1/1.</text>
</comment>
<comment type="similarity">
    <text evidence="2">Belongs to the RibF family.</text>
</comment>
<dbReference type="EC" id="2.7.1.26" evidence="1"/>
<dbReference type="EC" id="2.7.7.2" evidence="1"/>
<dbReference type="EMBL" id="U00089">
    <property type="protein sequence ID" value="AAB96321.1"/>
    <property type="molecule type" value="Genomic_DNA"/>
</dbReference>
<dbReference type="PIR" id="S73999">
    <property type="entry name" value="S73999"/>
</dbReference>
<dbReference type="RefSeq" id="NP_109846.1">
    <property type="nucleotide sequence ID" value="NC_000912.1"/>
</dbReference>
<dbReference type="RefSeq" id="WP_010874515.1">
    <property type="nucleotide sequence ID" value="NZ_OU342337.1"/>
</dbReference>
<dbReference type="SMR" id="P75587"/>
<dbReference type="IntAct" id="P75587">
    <property type="interactions" value="1"/>
</dbReference>
<dbReference type="STRING" id="272634.MPN_158"/>
<dbReference type="EnsemblBacteria" id="AAB96321">
    <property type="protein sequence ID" value="AAB96321"/>
    <property type="gene ID" value="MPN_158"/>
</dbReference>
<dbReference type="GeneID" id="66609194"/>
<dbReference type="KEGG" id="mpn:MPN_158"/>
<dbReference type="PATRIC" id="fig|272634.6.peg.176"/>
<dbReference type="HOGENOM" id="CLU_048437_0_2_14"/>
<dbReference type="OrthoDB" id="9803667at2"/>
<dbReference type="BioCyc" id="MPNE272634:G1GJ3-265-MONOMER"/>
<dbReference type="UniPathway" id="UPA00276">
    <property type="reaction ID" value="UER00406"/>
</dbReference>
<dbReference type="UniPathway" id="UPA00277">
    <property type="reaction ID" value="UER00407"/>
</dbReference>
<dbReference type="Proteomes" id="UP000000808">
    <property type="component" value="Chromosome"/>
</dbReference>
<dbReference type="GO" id="GO:0005524">
    <property type="term" value="F:ATP binding"/>
    <property type="evidence" value="ECO:0007669"/>
    <property type="project" value="UniProtKB-KW"/>
</dbReference>
<dbReference type="GO" id="GO:0003919">
    <property type="term" value="F:FMN adenylyltransferase activity"/>
    <property type="evidence" value="ECO:0007669"/>
    <property type="project" value="UniProtKB-EC"/>
</dbReference>
<dbReference type="GO" id="GO:0008531">
    <property type="term" value="F:riboflavin kinase activity"/>
    <property type="evidence" value="ECO:0007669"/>
    <property type="project" value="UniProtKB-EC"/>
</dbReference>
<dbReference type="GO" id="GO:0006747">
    <property type="term" value="P:FAD biosynthetic process"/>
    <property type="evidence" value="ECO:0007669"/>
    <property type="project" value="UniProtKB-UniPathway"/>
</dbReference>
<dbReference type="GO" id="GO:0009398">
    <property type="term" value="P:FMN biosynthetic process"/>
    <property type="evidence" value="ECO:0007669"/>
    <property type="project" value="UniProtKB-UniPathway"/>
</dbReference>
<dbReference type="GO" id="GO:0009231">
    <property type="term" value="P:riboflavin biosynthetic process"/>
    <property type="evidence" value="ECO:0007669"/>
    <property type="project" value="InterPro"/>
</dbReference>
<dbReference type="CDD" id="cd02064">
    <property type="entry name" value="FAD_synthetase_N"/>
    <property type="match status" value="1"/>
</dbReference>
<dbReference type="Gene3D" id="3.40.50.620">
    <property type="entry name" value="HUPs"/>
    <property type="match status" value="1"/>
</dbReference>
<dbReference type="Gene3D" id="2.40.30.30">
    <property type="entry name" value="Riboflavin kinase-like"/>
    <property type="match status" value="1"/>
</dbReference>
<dbReference type="InterPro" id="IPR015864">
    <property type="entry name" value="FAD_synthase"/>
</dbReference>
<dbReference type="InterPro" id="IPR023468">
    <property type="entry name" value="Riboflavin_kinase"/>
</dbReference>
<dbReference type="InterPro" id="IPR002606">
    <property type="entry name" value="Riboflavin_kinase_bac"/>
</dbReference>
<dbReference type="InterPro" id="IPR015865">
    <property type="entry name" value="Riboflavin_kinase_bac/euk"/>
</dbReference>
<dbReference type="InterPro" id="IPR023465">
    <property type="entry name" value="Riboflavin_kinase_dom_sf"/>
</dbReference>
<dbReference type="InterPro" id="IPR014729">
    <property type="entry name" value="Rossmann-like_a/b/a_fold"/>
</dbReference>
<dbReference type="NCBIfam" id="TIGR00083">
    <property type="entry name" value="ribF"/>
    <property type="match status" value="1"/>
</dbReference>
<dbReference type="PANTHER" id="PTHR22749:SF6">
    <property type="entry name" value="RIBOFLAVIN KINASE"/>
    <property type="match status" value="1"/>
</dbReference>
<dbReference type="PANTHER" id="PTHR22749">
    <property type="entry name" value="RIBOFLAVIN KINASE/FMN ADENYLYLTRANSFERASE"/>
    <property type="match status" value="1"/>
</dbReference>
<dbReference type="Pfam" id="PF01687">
    <property type="entry name" value="Flavokinase"/>
    <property type="match status" value="1"/>
</dbReference>
<dbReference type="PIRSF" id="PIRSF004491">
    <property type="entry name" value="FAD_Synth"/>
    <property type="match status" value="1"/>
</dbReference>
<dbReference type="SMART" id="SM00904">
    <property type="entry name" value="Flavokinase"/>
    <property type="match status" value="1"/>
</dbReference>
<dbReference type="SUPFAM" id="SSF52374">
    <property type="entry name" value="Nucleotidylyl transferase"/>
    <property type="match status" value="1"/>
</dbReference>
<dbReference type="SUPFAM" id="SSF82114">
    <property type="entry name" value="Riboflavin kinase-like"/>
    <property type="match status" value="1"/>
</dbReference>
<proteinExistence type="inferred from homology"/>
<gene>
    <name type="primary">ribF</name>
    <name type="ordered locus">MPN_158</name>
    <name type="ORF">MP673</name>
</gene>
<evidence type="ECO:0000250" key="1">
    <source>
        <dbReference type="UniProtKB" id="Q59263"/>
    </source>
</evidence>
<evidence type="ECO:0000305" key="2"/>
<feature type="chain" id="PRO_0000194146" description="Bifunctional riboflavin kinase/FMN adenylyltransferase">
    <location>
        <begin position="1"/>
        <end position="269"/>
    </location>
</feature>
<accession>P75587</accession>
<reference key="1">
    <citation type="journal article" date="1996" name="Nucleic Acids Res.">
        <title>Complete sequence analysis of the genome of the bacterium Mycoplasma pneumoniae.</title>
        <authorList>
            <person name="Himmelreich R."/>
            <person name="Hilbert H."/>
            <person name="Plagens H."/>
            <person name="Pirkl E."/>
            <person name="Li B.-C."/>
            <person name="Herrmann R."/>
        </authorList>
    </citation>
    <scope>NUCLEOTIDE SEQUENCE [LARGE SCALE GENOMIC DNA]</scope>
    <source>
        <strain>ATCC 29342 / M129 / Subtype 1</strain>
    </source>
</reference>
<organism>
    <name type="scientific">Mycoplasma pneumoniae (strain ATCC 29342 / M129 / Subtype 1)</name>
    <name type="common">Mycoplasmoides pneumoniae</name>
    <dbReference type="NCBI Taxonomy" id="272634"/>
    <lineage>
        <taxon>Bacteria</taxon>
        <taxon>Bacillati</taxon>
        <taxon>Mycoplasmatota</taxon>
        <taxon>Mycoplasmoidales</taxon>
        <taxon>Mycoplasmoidaceae</taxon>
        <taxon>Mycoplasmoides</taxon>
    </lineage>
</organism>
<keyword id="KW-0067">ATP-binding</keyword>
<keyword id="KW-0274">FAD</keyword>
<keyword id="KW-0285">Flavoprotein</keyword>
<keyword id="KW-0288">FMN</keyword>
<keyword id="KW-0418">Kinase</keyword>
<keyword id="KW-0511">Multifunctional enzyme</keyword>
<keyword id="KW-0547">Nucleotide-binding</keyword>
<keyword id="KW-0548">Nucleotidyltransferase</keyword>
<keyword id="KW-1185">Reference proteome</keyword>
<keyword id="KW-0808">Transferase</keyword>